<accession>B4UIK8</accession>
<sequence length="91" mass="9528">MANTASAEKRNRQAQKRRARNVQVRTGVKSAVKKLREAIAKGDPAATQVALKSAEKTIGKAASKGVLHKNAASRKISRLAKAAAKPAAAAK</sequence>
<gene>
    <name evidence="1" type="primary">rpsT</name>
    <name type="ordered locus">AnaeK_2817</name>
</gene>
<evidence type="ECO:0000255" key="1">
    <source>
        <dbReference type="HAMAP-Rule" id="MF_00500"/>
    </source>
</evidence>
<evidence type="ECO:0000256" key="2">
    <source>
        <dbReference type="SAM" id="MobiDB-lite"/>
    </source>
</evidence>
<evidence type="ECO:0000305" key="3"/>
<feature type="chain" id="PRO_1000126395" description="Small ribosomal subunit protein bS20">
    <location>
        <begin position="1"/>
        <end position="91"/>
    </location>
</feature>
<feature type="region of interest" description="Disordered" evidence="2">
    <location>
        <begin position="1"/>
        <end position="28"/>
    </location>
</feature>
<protein>
    <recommendedName>
        <fullName evidence="1">Small ribosomal subunit protein bS20</fullName>
    </recommendedName>
    <alternativeName>
        <fullName evidence="3">30S ribosomal protein S20</fullName>
    </alternativeName>
</protein>
<dbReference type="EMBL" id="CP001131">
    <property type="protein sequence ID" value="ACG74041.1"/>
    <property type="molecule type" value="Genomic_DNA"/>
</dbReference>
<dbReference type="RefSeq" id="WP_012526821.1">
    <property type="nucleotide sequence ID" value="NC_011145.1"/>
</dbReference>
<dbReference type="SMR" id="B4UIK8"/>
<dbReference type="KEGG" id="ank:AnaeK_2817"/>
<dbReference type="HOGENOM" id="CLU_160655_3_1_7"/>
<dbReference type="OrthoDB" id="9807974at2"/>
<dbReference type="Proteomes" id="UP000001871">
    <property type="component" value="Chromosome"/>
</dbReference>
<dbReference type="GO" id="GO:0005829">
    <property type="term" value="C:cytosol"/>
    <property type="evidence" value="ECO:0007669"/>
    <property type="project" value="TreeGrafter"/>
</dbReference>
<dbReference type="GO" id="GO:0015935">
    <property type="term" value="C:small ribosomal subunit"/>
    <property type="evidence" value="ECO:0007669"/>
    <property type="project" value="TreeGrafter"/>
</dbReference>
<dbReference type="GO" id="GO:0070181">
    <property type="term" value="F:small ribosomal subunit rRNA binding"/>
    <property type="evidence" value="ECO:0007669"/>
    <property type="project" value="TreeGrafter"/>
</dbReference>
<dbReference type="GO" id="GO:0003735">
    <property type="term" value="F:structural constituent of ribosome"/>
    <property type="evidence" value="ECO:0007669"/>
    <property type="project" value="InterPro"/>
</dbReference>
<dbReference type="GO" id="GO:0006412">
    <property type="term" value="P:translation"/>
    <property type="evidence" value="ECO:0007669"/>
    <property type="project" value="UniProtKB-UniRule"/>
</dbReference>
<dbReference type="FunFam" id="1.20.58.110:FF:000001">
    <property type="entry name" value="30S ribosomal protein S20"/>
    <property type="match status" value="1"/>
</dbReference>
<dbReference type="Gene3D" id="1.20.58.110">
    <property type="entry name" value="Ribosomal protein S20"/>
    <property type="match status" value="1"/>
</dbReference>
<dbReference type="HAMAP" id="MF_00500">
    <property type="entry name" value="Ribosomal_bS20"/>
    <property type="match status" value="1"/>
</dbReference>
<dbReference type="InterPro" id="IPR002583">
    <property type="entry name" value="Ribosomal_bS20"/>
</dbReference>
<dbReference type="InterPro" id="IPR036510">
    <property type="entry name" value="Ribosomal_bS20_sf"/>
</dbReference>
<dbReference type="NCBIfam" id="TIGR00029">
    <property type="entry name" value="S20"/>
    <property type="match status" value="1"/>
</dbReference>
<dbReference type="PANTHER" id="PTHR33398">
    <property type="entry name" value="30S RIBOSOMAL PROTEIN S20"/>
    <property type="match status" value="1"/>
</dbReference>
<dbReference type="PANTHER" id="PTHR33398:SF1">
    <property type="entry name" value="SMALL RIBOSOMAL SUBUNIT PROTEIN BS20C"/>
    <property type="match status" value="1"/>
</dbReference>
<dbReference type="Pfam" id="PF01649">
    <property type="entry name" value="Ribosomal_S20p"/>
    <property type="match status" value="1"/>
</dbReference>
<dbReference type="SUPFAM" id="SSF46992">
    <property type="entry name" value="Ribosomal protein S20"/>
    <property type="match status" value="1"/>
</dbReference>
<keyword id="KW-0687">Ribonucleoprotein</keyword>
<keyword id="KW-0689">Ribosomal protein</keyword>
<keyword id="KW-0694">RNA-binding</keyword>
<keyword id="KW-0699">rRNA-binding</keyword>
<comment type="function">
    <text evidence="1">Binds directly to 16S ribosomal RNA.</text>
</comment>
<comment type="similarity">
    <text evidence="1">Belongs to the bacterial ribosomal protein bS20 family.</text>
</comment>
<reference key="1">
    <citation type="submission" date="2008-08" db="EMBL/GenBank/DDBJ databases">
        <title>Complete sequence of Anaeromyxobacter sp. K.</title>
        <authorList>
            <consortium name="US DOE Joint Genome Institute"/>
            <person name="Lucas S."/>
            <person name="Copeland A."/>
            <person name="Lapidus A."/>
            <person name="Glavina del Rio T."/>
            <person name="Dalin E."/>
            <person name="Tice H."/>
            <person name="Bruce D."/>
            <person name="Goodwin L."/>
            <person name="Pitluck S."/>
            <person name="Saunders E."/>
            <person name="Brettin T."/>
            <person name="Detter J.C."/>
            <person name="Han C."/>
            <person name="Larimer F."/>
            <person name="Land M."/>
            <person name="Hauser L."/>
            <person name="Kyrpides N."/>
            <person name="Ovchinnikiva G."/>
            <person name="Beliaev A."/>
        </authorList>
    </citation>
    <scope>NUCLEOTIDE SEQUENCE [LARGE SCALE GENOMIC DNA]</scope>
    <source>
        <strain>K</strain>
    </source>
</reference>
<proteinExistence type="inferred from homology"/>
<organism>
    <name type="scientific">Anaeromyxobacter sp. (strain K)</name>
    <dbReference type="NCBI Taxonomy" id="447217"/>
    <lineage>
        <taxon>Bacteria</taxon>
        <taxon>Pseudomonadati</taxon>
        <taxon>Myxococcota</taxon>
        <taxon>Myxococcia</taxon>
        <taxon>Myxococcales</taxon>
        <taxon>Cystobacterineae</taxon>
        <taxon>Anaeromyxobacteraceae</taxon>
        <taxon>Anaeromyxobacter</taxon>
    </lineage>
</organism>
<name>RS20_ANASK</name>